<comment type="function">
    <text evidence="1">An essential GTPase which binds GTP, GDP and possibly (p)ppGpp with moderate affinity, with high nucleotide exchange rates and a fairly low GTP hydrolysis rate. Plays a role in control of the cell cycle, stress response, ribosome biogenesis and in those bacteria that undergo differentiation, in morphogenesis control.</text>
</comment>
<comment type="cofactor">
    <cofactor evidence="1">
        <name>Mg(2+)</name>
        <dbReference type="ChEBI" id="CHEBI:18420"/>
    </cofactor>
</comment>
<comment type="subunit">
    <text evidence="1">Monomer.</text>
</comment>
<comment type="subcellular location">
    <subcellularLocation>
        <location evidence="1">Cytoplasm</location>
    </subcellularLocation>
</comment>
<comment type="similarity">
    <text evidence="1">Belongs to the TRAFAC class OBG-HflX-like GTPase superfamily. OBG GTPase family.</text>
</comment>
<feature type="chain" id="PRO_0000385658" description="GTPase Obg">
    <location>
        <begin position="1"/>
        <end position="374"/>
    </location>
</feature>
<feature type="domain" description="Obg" evidence="2">
    <location>
        <begin position="1"/>
        <end position="159"/>
    </location>
</feature>
<feature type="domain" description="OBG-type G" evidence="1">
    <location>
        <begin position="160"/>
        <end position="333"/>
    </location>
</feature>
<feature type="region of interest" description="Disordered" evidence="3">
    <location>
        <begin position="337"/>
        <end position="374"/>
    </location>
</feature>
<feature type="compositionally biased region" description="Acidic residues" evidence="3">
    <location>
        <begin position="360"/>
        <end position="374"/>
    </location>
</feature>
<feature type="binding site" evidence="1">
    <location>
        <begin position="166"/>
        <end position="173"/>
    </location>
    <ligand>
        <name>GTP</name>
        <dbReference type="ChEBI" id="CHEBI:37565"/>
    </ligand>
</feature>
<feature type="binding site" evidence="1">
    <location>
        <position position="173"/>
    </location>
    <ligand>
        <name>Mg(2+)</name>
        <dbReference type="ChEBI" id="CHEBI:18420"/>
    </ligand>
</feature>
<feature type="binding site" evidence="1">
    <location>
        <begin position="191"/>
        <end position="195"/>
    </location>
    <ligand>
        <name>GTP</name>
        <dbReference type="ChEBI" id="CHEBI:37565"/>
    </ligand>
</feature>
<feature type="binding site" evidence="1">
    <location>
        <position position="193"/>
    </location>
    <ligand>
        <name>Mg(2+)</name>
        <dbReference type="ChEBI" id="CHEBI:18420"/>
    </ligand>
</feature>
<feature type="binding site" evidence="1">
    <location>
        <begin position="213"/>
        <end position="216"/>
    </location>
    <ligand>
        <name>GTP</name>
        <dbReference type="ChEBI" id="CHEBI:37565"/>
    </ligand>
</feature>
<feature type="binding site" evidence="1">
    <location>
        <begin position="283"/>
        <end position="286"/>
    </location>
    <ligand>
        <name>GTP</name>
        <dbReference type="ChEBI" id="CHEBI:37565"/>
    </ligand>
</feature>
<feature type="binding site" evidence="1">
    <location>
        <begin position="314"/>
        <end position="316"/>
    </location>
    <ligand>
        <name>GTP</name>
        <dbReference type="ChEBI" id="CHEBI:37565"/>
    </ligand>
</feature>
<keyword id="KW-0963">Cytoplasm</keyword>
<keyword id="KW-0342">GTP-binding</keyword>
<keyword id="KW-0378">Hydrolase</keyword>
<keyword id="KW-0460">Magnesium</keyword>
<keyword id="KW-0479">Metal-binding</keyword>
<keyword id="KW-0547">Nucleotide-binding</keyword>
<keyword id="KW-1185">Reference proteome</keyword>
<reference key="1">
    <citation type="journal article" date="2008" name="BMC Genomics">
        <title>Acidithiobacillus ferrooxidans metabolism: from genome sequence to industrial applications.</title>
        <authorList>
            <person name="Valdes J."/>
            <person name="Pedroso I."/>
            <person name="Quatrini R."/>
            <person name="Dodson R.J."/>
            <person name="Tettelin H."/>
            <person name="Blake R. II"/>
            <person name="Eisen J.A."/>
            <person name="Holmes D.S."/>
        </authorList>
    </citation>
    <scope>NUCLEOTIDE SEQUENCE [LARGE SCALE GENOMIC DNA]</scope>
    <source>
        <strain>ATCC 23270 / DSM 14882 / CIP 104768 / NCIMB 8455</strain>
    </source>
</reference>
<name>OBG_ACIF2</name>
<proteinExistence type="inferred from homology"/>
<dbReference type="EC" id="3.6.5.-" evidence="1"/>
<dbReference type="EMBL" id="CP001219">
    <property type="protein sequence ID" value="ACK80361.1"/>
    <property type="molecule type" value="Genomic_DNA"/>
</dbReference>
<dbReference type="RefSeq" id="WP_012536064.1">
    <property type="nucleotide sequence ID" value="NC_011761.1"/>
</dbReference>
<dbReference type="SMR" id="B7J427"/>
<dbReference type="STRING" id="243159.AFE_0283"/>
<dbReference type="PaxDb" id="243159-AFE_0283"/>
<dbReference type="GeneID" id="65279665"/>
<dbReference type="KEGG" id="afr:AFE_0283"/>
<dbReference type="eggNOG" id="COG0536">
    <property type="taxonomic scope" value="Bacteria"/>
</dbReference>
<dbReference type="HOGENOM" id="CLU_011747_2_0_6"/>
<dbReference type="Proteomes" id="UP000001362">
    <property type="component" value="Chromosome"/>
</dbReference>
<dbReference type="GO" id="GO:0005737">
    <property type="term" value="C:cytoplasm"/>
    <property type="evidence" value="ECO:0007669"/>
    <property type="project" value="UniProtKB-SubCell"/>
</dbReference>
<dbReference type="GO" id="GO:0005525">
    <property type="term" value="F:GTP binding"/>
    <property type="evidence" value="ECO:0007669"/>
    <property type="project" value="UniProtKB-UniRule"/>
</dbReference>
<dbReference type="GO" id="GO:0003924">
    <property type="term" value="F:GTPase activity"/>
    <property type="evidence" value="ECO:0007669"/>
    <property type="project" value="UniProtKB-UniRule"/>
</dbReference>
<dbReference type="GO" id="GO:0000287">
    <property type="term" value="F:magnesium ion binding"/>
    <property type="evidence" value="ECO:0007669"/>
    <property type="project" value="InterPro"/>
</dbReference>
<dbReference type="GO" id="GO:0042254">
    <property type="term" value="P:ribosome biogenesis"/>
    <property type="evidence" value="ECO:0007669"/>
    <property type="project" value="UniProtKB-UniRule"/>
</dbReference>
<dbReference type="CDD" id="cd01898">
    <property type="entry name" value="Obg"/>
    <property type="match status" value="1"/>
</dbReference>
<dbReference type="FunFam" id="2.70.210.12:FF:000001">
    <property type="entry name" value="GTPase Obg"/>
    <property type="match status" value="1"/>
</dbReference>
<dbReference type="Gene3D" id="2.70.210.12">
    <property type="entry name" value="GTP1/OBG domain"/>
    <property type="match status" value="1"/>
</dbReference>
<dbReference type="Gene3D" id="3.40.50.300">
    <property type="entry name" value="P-loop containing nucleotide triphosphate hydrolases"/>
    <property type="match status" value="1"/>
</dbReference>
<dbReference type="HAMAP" id="MF_01454">
    <property type="entry name" value="GTPase_Obg"/>
    <property type="match status" value="1"/>
</dbReference>
<dbReference type="InterPro" id="IPR031167">
    <property type="entry name" value="G_OBG"/>
</dbReference>
<dbReference type="InterPro" id="IPR006073">
    <property type="entry name" value="GTP-bd"/>
</dbReference>
<dbReference type="InterPro" id="IPR014100">
    <property type="entry name" value="GTP-bd_Obg/CgtA"/>
</dbReference>
<dbReference type="InterPro" id="IPR006074">
    <property type="entry name" value="GTP1-OBG_CS"/>
</dbReference>
<dbReference type="InterPro" id="IPR006169">
    <property type="entry name" value="GTP1_OBG_dom"/>
</dbReference>
<dbReference type="InterPro" id="IPR036726">
    <property type="entry name" value="GTP1_OBG_dom_sf"/>
</dbReference>
<dbReference type="InterPro" id="IPR045086">
    <property type="entry name" value="OBG_GTPase"/>
</dbReference>
<dbReference type="InterPro" id="IPR027417">
    <property type="entry name" value="P-loop_NTPase"/>
</dbReference>
<dbReference type="NCBIfam" id="TIGR02729">
    <property type="entry name" value="Obg_CgtA"/>
    <property type="match status" value="1"/>
</dbReference>
<dbReference type="NCBIfam" id="NF008955">
    <property type="entry name" value="PRK12297.1"/>
    <property type="match status" value="1"/>
</dbReference>
<dbReference type="NCBIfam" id="NF008956">
    <property type="entry name" value="PRK12299.1"/>
    <property type="match status" value="1"/>
</dbReference>
<dbReference type="PANTHER" id="PTHR11702">
    <property type="entry name" value="DEVELOPMENTALLY REGULATED GTP-BINDING PROTEIN-RELATED"/>
    <property type="match status" value="1"/>
</dbReference>
<dbReference type="PANTHER" id="PTHR11702:SF31">
    <property type="entry name" value="MITOCHONDRIAL RIBOSOME-ASSOCIATED GTPASE 2"/>
    <property type="match status" value="1"/>
</dbReference>
<dbReference type="Pfam" id="PF01018">
    <property type="entry name" value="GTP1_OBG"/>
    <property type="match status" value="1"/>
</dbReference>
<dbReference type="Pfam" id="PF01926">
    <property type="entry name" value="MMR_HSR1"/>
    <property type="match status" value="1"/>
</dbReference>
<dbReference type="PIRSF" id="PIRSF002401">
    <property type="entry name" value="GTP_bd_Obg/CgtA"/>
    <property type="match status" value="1"/>
</dbReference>
<dbReference type="PRINTS" id="PR00326">
    <property type="entry name" value="GTP1OBG"/>
</dbReference>
<dbReference type="SUPFAM" id="SSF82051">
    <property type="entry name" value="Obg GTP-binding protein N-terminal domain"/>
    <property type="match status" value="1"/>
</dbReference>
<dbReference type="SUPFAM" id="SSF52540">
    <property type="entry name" value="P-loop containing nucleoside triphosphate hydrolases"/>
    <property type="match status" value="1"/>
</dbReference>
<dbReference type="PROSITE" id="PS51710">
    <property type="entry name" value="G_OBG"/>
    <property type="match status" value="1"/>
</dbReference>
<dbReference type="PROSITE" id="PS00905">
    <property type="entry name" value="GTP1_OBG"/>
    <property type="match status" value="1"/>
</dbReference>
<dbReference type="PROSITE" id="PS51883">
    <property type="entry name" value="OBG"/>
    <property type="match status" value="1"/>
</dbReference>
<protein>
    <recommendedName>
        <fullName evidence="1">GTPase Obg</fullName>
        <ecNumber evidence="1">3.6.5.-</ecNumber>
    </recommendedName>
    <alternativeName>
        <fullName evidence="1">GTP-binding protein Obg</fullName>
    </alternativeName>
</protein>
<sequence>MKFIDEVRIHVASGNGGHGAVSFRREKFIPFGGPDGGDGGRGGSVYLVAQASLNTLIDFRYQRRYRAENGHGGAGRQMTGRAGHDLEIKVPVGTLVYDDDTHELLGDLRFEGERLLIARSGRGGHGNLFYKSSTNRAPRQFEKGGAGEERDLRLELRLLADVGLLGLPNAGKSTLIRAVSAARPKVADYPFTTLYPNLGVVRVAAHESFVLADIPGLIPGASEGAGLGTRFLKHLSRTRLLLHLVDMAPVDGSDPAMNIRALEMELAAYSPTLAARPRWLVVNKSDLLPGEEAEARFQQICTALQWESPAFLISAASGAGCEALVYAIWQALPDLPPAADPTQTEDWGDESDAGERLENWEGDDLDADWEEEQV</sequence>
<evidence type="ECO:0000255" key="1">
    <source>
        <dbReference type="HAMAP-Rule" id="MF_01454"/>
    </source>
</evidence>
<evidence type="ECO:0000255" key="2">
    <source>
        <dbReference type="PROSITE-ProRule" id="PRU01231"/>
    </source>
</evidence>
<evidence type="ECO:0000256" key="3">
    <source>
        <dbReference type="SAM" id="MobiDB-lite"/>
    </source>
</evidence>
<organism>
    <name type="scientific">Acidithiobacillus ferrooxidans (strain ATCC 23270 / DSM 14882 / CIP 104768 / NCIMB 8455)</name>
    <name type="common">Ferrobacillus ferrooxidans (strain ATCC 23270)</name>
    <dbReference type="NCBI Taxonomy" id="243159"/>
    <lineage>
        <taxon>Bacteria</taxon>
        <taxon>Pseudomonadati</taxon>
        <taxon>Pseudomonadota</taxon>
        <taxon>Acidithiobacillia</taxon>
        <taxon>Acidithiobacillales</taxon>
        <taxon>Acidithiobacillaceae</taxon>
        <taxon>Acidithiobacillus</taxon>
    </lineage>
</organism>
<accession>B7J427</accession>
<gene>
    <name evidence="1" type="primary">obg</name>
    <name type="ordered locus">AFE_0283</name>
</gene>